<organism>
    <name type="scientific">Panagrellus redivivus</name>
    <name type="common">Microworm</name>
    <dbReference type="NCBI Taxonomy" id="6233"/>
    <lineage>
        <taxon>Eukaryota</taxon>
        <taxon>Metazoa</taxon>
        <taxon>Ecdysozoa</taxon>
        <taxon>Nematoda</taxon>
        <taxon>Chromadorea</taxon>
        <taxon>Rhabditida</taxon>
        <taxon>Tylenchina</taxon>
        <taxon>Panagrolaimomorpha</taxon>
        <taxon>Panagrolaimoidea</taxon>
        <taxon>Panagrolaimidae</taxon>
        <taxon>Panagrellus</taxon>
    </lineage>
</organism>
<protein>
    <recommendedName>
        <fullName>FMRFamide-like neuropeptide PF6</fullName>
    </recommendedName>
    <alternativeName>
        <fullName>NGAPQPFVRF-amide</fullName>
    </alternativeName>
</protein>
<sequence>NGAPQPFVRF</sequence>
<accession>P82660</accession>
<keyword id="KW-0027">Amidation</keyword>
<keyword id="KW-0903">Direct protein sequencing</keyword>
<keyword id="KW-0527">Neuropeptide</keyword>
<keyword id="KW-1185">Reference proteome</keyword>
<keyword id="KW-0964">Secreted</keyword>
<dbReference type="Proteomes" id="UP000492821">
    <property type="component" value="Unplaced"/>
</dbReference>
<dbReference type="GO" id="GO:0005576">
    <property type="term" value="C:extracellular region"/>
    <property type="evidence" value="ECO:0007669"/>
    <property type="project" value="UniProtKB-SubCell"/>
</dbReference>
<dbReference type="GO" id="GO:0007218">
    <property type="term" value="P:neuropeptide signaling pathway"/>
    <property type="evidence" value="ECO:0007669"/>
    <property type="project" value="UniProtKB-KW"/>
</dbReference>
<reference key="1">
    <citation type="submission" date="2000-07" db="UniProtKB">
        <title>Isolation, characterization and pharmacology of RMRFamide-related peptides (FaRPs) from free-living nematode, Panagrellus redivivus.</title>
        <authorList>
            <person name="Moffett C.L."/>
            <person name="Marks N.J."/>
            <person name="Halton D.W."/>
            <person name="Thomson D.P."/>
            <person name="Geary T.G."/>
            <person name="Maule A.G."/>
        </authorList>
    </citation>
    <scope>PROTEIN SEQUENCE</scope>
    <scope>FUNCTION</scope>
    <scope>AMIDATION AT PHE-10</scope>
</reference>
<feature type="peptide" id="PRO_0000043711" description="FMRFamide-like neuropeptide PF6">
    <location>
        <begin position="1"/>
        <end position="10"/>
    </location>
</feature>
<feature type="modified residue" description="Phenylalanine amide" evidence="1">
    <location>
        <position position="10"/>
    </location>
</feature>
<comment type="function">
    <text evidence="1">Myoactive.</text>
</comment>
<comment type="subcellular location">
    <subcellularLocation>
        <location>Secreted</location>
    </subcellularLocation>
</comment>
<comment type="similarity">
    <text evidence="2">Belongs to the FARP (FMRFamide related peptide) family.</text>
</comment>
<proteinExistence type="evidence at protein level"/>
<name>FAR6_PANRE</name>
<evidence type="ECO:0000269" key="1">
    <source ref="1"/>
</evidence>
<evidence type="ECO:0000305" key="2"/>